<proteinExistence type="inferred from homology"/>
<accession>Q32L03</accession>
<name>MED11_BOVIN</name>
<protein>
    <recommendedName>
        <fullName>Mediator of RNA polymerase II transcription subunit 11</fullName>
    </recommendedName>
    <alternativeName>
        <fullName>Mediator complex subunit 11</fullName>
    </alternativeName>
</protein>
<dbReference type="EMBL" id="BC109828">
    <property type="protein sequence ID" value="AAI09829.1"/>
    <property type="molecule type" value="mRNA"/>
</dbReference>
<dbReference type="RefSeq" id="NP_001033173.1">
    <property type="nucleotide sequence ID" value="NM_001038084.2"/>
</dbReference>
<dbReference type="SMR" id="Q32L03"/>
<dbReference type="FunCoup" id="Q32L03">
    <property type="interactions" value="1458"/>
</dbReference>
<dbReference type="STRING" id="9913.ENSBTAP00000024370"/>
<dbReference type="PaxDb" id="9913-ENSBTAP00000024370"/>
<dbReference type="GeneID" id="511672"/>
<dbReference type="KEGG" id="bta:511672"/>
<dbReference type="CTD" id="400569"/>
<dbReference type="eggNOG" id="KOG4057">
    <property type="taxonomic scope" value="Eukaryota"/>
</dbReference>
<dbReference type="InParanoid" id="Q32L03"/>
<dbReference type="OrthoDB" id="5418434at2759"/>
<dbReference type="Proteomes" id="UP000009136">
    <property type="component" value="Unplaced"/>
</dbReference>
<dbReference type="GO" id="GO:0016592">
    <property type="term" value="C:mediator complex"/>
    <property type="evidence" value="ECO:0000318"/>
    <property type="project" value="GO_Central"/>
</dbReference>
<dbReference type="GO" id="GO:0003712">
    <property type="term" value="F:transcription coregulator activity"/>
    <property type="evidence" value="ECO:0007669"/>
    <property type="project" value="InterPro"/>
</dbReference>
<dbReference type="GO" id="GO:0006357">
    <property type="term" value="P:regulation of transcription by RNA polymerase II"/>
    <property type="evidence" value="ECO:0007669"/>
    <property type="project" value="InterPro"/>
</dbReference>
<dbReference type="FunFam" id="1.10.287.3490:FF:000001">
    <property type="entry name" value="Mediator of RNA polymerase II transcription subunit 11"/>
    <property type="match status" value="1"/>
</dbReference>
<dbReference type="Gene3D" id="1.10.287.3490">
    <property type="match status" value="1"/>
</dbReference>
<dbReference type="InterPro" id="IPR019404">
    <property type="entry name" value="Mediator_Med11"/>
</dbReference>
<dbReference type="PANTHER" id="PTHR22890">
    <property type="entry name" value="MEDIATOR OF RNA POLYMERASE II TRANSCRIPTION SUBUNIT 11"/>
    <property type="match status" value="1"/>
</dbReference>
<dbReference type="Pfam" id="PF10280">
    <property type="entry name" value="Med11"/>
    <property type="match status" value="1"/>
</dbReference>
<evidence type="ECO:0000250" key="1"/>
<evidence type="ECO:0000250" key="2">
    <source>
        <dbReference type="UniProtKB" id="Q9P086"/>
    </source>
</evidence>
<evidence type="ECO:0000305" key="3"/>
<feature type="initiator methionine" description="Removed" evidence="2">
    <location>
        <position position="1"/>
    </location>
</feature>
<feature type="chain" id="PRO_0000304307" description="Mediator of RNA polymerase II transcription subunit 11">
    <location>
        <begin position="2"/>
        <end position="117"/>
    </location>
</feature>
<feature type="modified residue" description="N-acetylalanine" evidence="2">
    <location>
        <position position="2"/>
    </location>
</feature>
<sequence>MATYSLANERLRALEDIEREIGAILQNAGTVILELSKEKTNERLLDRQAAAFTASVQHVEAELSAQIRYLTQVATGQPHEGSSYSSRKDCQMALKRLDYARLKLSEVARTCEQMLEN</sequence>
<gene>
    <name type="primary">MED11</name>
</gene>
<organism>
    <name type="scientific">Bos taurus</name>
    <name type="common">Bovine</name>
    <dbReference type="NCBI Taxonomy" id="9913"/>
    <lineage>
        <taxon>Eukaryota</taxon>
        <taxon>Metazoa</taxon>
        <taxon>Chordata</taxon>
        <taxon>Craniata</taxon>
        <taxon>Vertebrata</taxon>
        <taxon>Euteleostomi</taxon>
        <taxon>Mammalia</taxon>
        <taxon>Eutheria</taxon>
        <taxon>Laurasiatheria</taxon>
        <taxon>Artiodactyla</taxon>
        <taxon>Ruminantia</taxon>
        <taxon>Pecora</taxon>
        <taxon>Bovidae</taxon>
        <taxon>Bovinae</taxon>
        <taxon>Bos</taxon>
    </lineage>
</organism>
<comment type="function">
    <text evidence="2">Component of the Mediator complex, a coactivator involved in the regulated transcription of nearly all RNA polymerase II-dependent genes. Mediator functions as a bridge to convey information from gene-specific regulatory proteins to the basal RNA polymerase II transcription machinery. Mediator is recruited to promoters by direct interactions with regulatory proteins and serves as a scaffold for the assembly of a functional pre-initiation complex with RNA polymerase II and the general transcription factors (By similarity).</text>
</comment>
<comment type="subunit">
    <text evidence="1">Component of the Mediator complex, which is composed of MED1, MED4, MED6, MED7, MED8, MED9, MED10, MED11, MED12, MED13, MED13L, MED14, MED15, MED16, MED17, MED18, MED19, MED20, MED21, MED22, MED23, MED24, MED25, MED26, MED27, MED29, MED30, MED31, CCNC, CDK8 and CDC2L6/CDK11. The MED12, MED13, CCNC and CDK8 subunits form a distinct module termed the CDK8 module. Mediator containing the CDK8 module is less active than Mediator lacking this module in supporting transcriptional activation. Individual preparations of the Mediator complex lacking one or more distinct subunits have been variously termed ARC, CRSP, DRIP, PC2, SMCC and TRAP (By similarity).</text>
</comment>
<comment type="subcellular location">
    <subcellularLocation>
        <location evidence="3">Nucleus</location>
    </subcellularLocation>
</comment>
<comment type="similarity">
    <text evidence="3">Belongs to the Mediator complex subunit 11 family.</text>
</comment>
<keyword id="KW-0007">Acetylation</keyword>
<keyword id="KW-0010">Activator</keyword>
<keyword id="KW-0539">Nucleus</keyword>
<keyword id="KW-1185">Reference proteome</keyword>
<keyword id="KW-0804">Transcription</keyword>
<keyword id="KW-0805">Transcription regulation</keyword>
<reference key="1">
    <citation type="submission" date="2005-11" db="EMBL/GenBank/DDBJ databases">
        <authorList>
            <consortium name="NIH - Mammalian Gene Collection (MGC) project"/>
        </authorList>
    </citation>
    <scope>NUCLEOTIDE SEQUENCE [LARGE SCALE MRNA]</scope>
    <source>
        <strain>Crossbred X Angus</strain>
        <tissue>Liver</tissue>
    </source>
</reference>